<comment type="function">
    <text evidence="1">Catalyzes the oxidation of either pyridoxine 5'-phosphate (PNP) or pyridoxamine 5'-phosphate (PMP) into pyridoxal 5'-phosphate (PLP).</text>
</comment>
<comment type="catalytic activity">
    <reaction evidence="1">
        <text>pyridoxamine 5'-phosphate + O2 + H2O = pyridoxal 5'-phosphate + H2O2 + NH4(+)</text>
        <dbReference type="Rhea" id="RHEA:15817"/>
        <dbReference type="ChEBI" id="CHEBI:15377"/>
        <dbReference type="ChEBI" id="CHEBI:15379"/>
        <dbReference type="ChEBI" id="CHEBI:16240"/>
        <dbReference type="ChEBI" id="CHEBI:28938"/>
        <dbReference type="ChEBI" id="CHEBI:58451"/>
        <dbReference type="ChEBI" id="CHEBI:597326"/>
        <dbReference type="EC" id="1.4.3.5"/>
    </reaction>
</comment>
<comment type="catalytic activity">
    <reaction evidence="1">
        <text>pyridoxine 5'-phosphate + O2 = pyridoxal 5'-phosphate + H2O2</text>
        <dbReference type="Rhea" id="RHEA:15149"/>
        <dbReference type="ChEBI" id="CHEBI:15379"/>
        <dbReference type="ChEBI" id="CHEBI:16240"/>
        <dbReference type="ChEBI" id="CHEBI:58589"/>
        <dbReference type="ChEBI" id="CHEBI:597326"/>
        <dbReference type="EC" id="1.4.3.5"/>
    </reaction>
</comment>
<comment type="cofactor">
    <cofactor evidence="1">
        <name>FMN</name>
        <dbReference type="ChEBI" id="CHEBI:58210"/>
    </cofactor>
    <text evidence="1">Binds 1 FMN per subunit.</text>
</comment>
<comment type="pathway">
    <text evidence="1">Cofactor metabolism; pyridoxal 5'-phosphate salvage; pyridoxal 5'-phosphate from pyridoxamine 5'-phosphate: step 1/1.</text>
</comment>
<comment type="pathway">
    <text evidence="1">Cofactor metabolism; pyridoxal 5'-phosphate salvage; pyridoxal 5'-phosphate from pyridoxine 5'-phosphate: step 1/1.</text>
</comment>
<comment type="subunit">
    <text evidence="1">Homodimer.</text>
</comment>
<comment type="similarity">
    <text evidence="1">Belongs to the pyridoxamine 5'-phosphate oxidase family.</text>
</comment>
<protein>
    <recommendedName>
        <fullName evidence="1">Pyridoxine/pyridoxamine 5'-phosphate oxidase</fullName>
        <ecNumber evidence="1">1.4.3.5</ecNumber>
    </recommendedName>
    <alternativeName>
        <fullName evidence="1">PNP/PMP oxidase</fullName>
        <shortName evidence="1">PNPOx</shortName>
    </alternativeName>
    <alternativeName>
        <fullName evidence="1">Pyridoxal 5'-phosphate synthase</fullName>
    </alternativeName>
</protein>
<accession>Q11KF1</accession>
<name>PDXH_CHESB</name>
<organism>
    <name type="scientific">Chelativorans sp. (strain BNC1)</name>
    <dbReference type="NCBI Taxonomy" id="266779"/>
    <lineage>
        <taxon>Bacteria</taxon>
        <taxon>Pseudomonadati</taxon>
        <taxon>Pseudomonadota</taxon>
        <taxon>Alphaproteobacteria</taxon>
        <taxon>Hyphomicrobiales</taxon>
        <taxon>Phyllobacteriaceae</taxon>
        <taxon>Chelativorans</taxon>
    </lineage>
</organism>
<feature type="chain" id="PRO_0000255871" description="Pyridoxine/pyridoxamine 5'-phosphate oxidase">
    <location>
        <begin position="1"/>
        <end position="209"/>
    </location>
</feature>
<feature type="binding site" evidence="1">
    <location>
        <begin position="57"/>
        <end position="62"/>
    </location>
    <ligand>
        <name>FMN</name>
        <dbReference type="ChEBI" id="CHEBI:58210"/>
    </ligand>
</feature>
<feature type="binding site" evidence="1">
    <location>
        <position position="62"/>
    </location>
    <ligand>
        <name>substrate</name>
    </ligand>
</feature>
<feature type="binding site" evidence="1">
    <location>
        <begin position="72"/>
        <end position="73"/>
    </location>
    <ligand>
        <name>FMN</name>
        <dbReference type="ChEBI" id="CHEBI:58210"/>
    </ligand>
</feature>
<feature type="binding site" evidence="1">
    <location>
        <position position="79"/>
    </location>
    <ligand>
        <name>FMN</name>
        <dbReference type="ChEBI" id="CHEBI:58210"/>
    </ligand>
</feature>
<feature type="binding site" evidence="1">
    <location>
        <position position="101"/>
    </location>
    <ligand>
        <name>FMN</name>
        <dbReference type="ChEBI" id="CHEBI:58210"/>
    </ligand>
</feature>
<feature type="binding site" evidence="1">
    <location>
        <position position="119"/>
    </location>
    <ligand>
        <name>substrate</name>
    </ligand>
</feature>
<feature type="binding site" evidence="1">
    <location>
        <position position="123"/>
    </location>
    <ligand>
        <name>substrate</name>
    </ligand>
</feature>
<feature type="binding site" evidence="1">
    <location>
        <position position="127"/>
    </location>
    <ligand>
        <name>substrate</name>
    </ligand>
</feature>
<feature type="binding site" evidence="1">
    <location>
        <begin position="136"/>
        <end position="137"/>
    </location>
    <ligand>
        <name>FMN</name>
        <dbReference type="ChEBI" id="CHEBI:58210"/>
    </ligand>
</feature>
<feature type="binding site" evidence="1">
    <location>
        <position position="181"/>
    </location>
    <ligand>
        <name>FMN</name>
        <dbReference type="ChEBI" id="CHEBI:58210"/>
    </ligand>
</feature>
<feature type="binding site" evidence="1">
    <location>
        <begin position="187"/>
        <end position="189"/>
    </location>
    <ligand>
        <name>substrate</name>
    </ligand>
</feature>
<feature type="binding site" evidence="1">
    <location>
        <position position="191"/>
    </location>
    <ligand>
        <name>FMN</name>
        <dbReference type="ChEBI" id="CHEBI:58210"/>
    </ligand>
</feature>
<evidence type="ECO:0000255" key="1">
    <source>
        <dbReference type="HAMAP-Rule" id="MF_01629"/>
    </source>
</evidence>
<reference key="1">
    <citation type="submission" date="2006-06" db="EMBL/GenBank/DDBJ databases">
        <title>Complete sequence of chromosome of Mesorhizobium sp. BNC1.</title>
        <authorList>
            <consortium name="US DOE Joint Genome Institute"/>
            <person name="Copeland A."/>
            <person name="Lucas S."/>
            <person name="Lapidus A."/>
            <person name="Barry K."/>
            <person name="Detter J.C."/>
            <person name="Glavina del Rio T."/>
            <person name="Hammon N."/>
            <person name="Israni S."/>
            <person name="Dalin E."/>
            <person name="Tice H."/>
            <person name="Pitluck S."/>
            <person name="Chertkov O."/>
            <person name="Brettin T."/>
            <person name="Bruce D."/>
            <person name="Han C."/>
            <person name="Tapia R."/>
            <person name="Gilna P."/>
            <person name="Schmutz J."/>
            <person name="Larimer F."/>
            <person name="Land M."/>
            <person name="Hauser L."/>
            <person name="Kyrpides N."/>
            <person name="Mikhailova N."/>
            <person name="Richardson P."/>
        </authorList>
    </citation>
    <scope>NUCLEOTIDE SEQUENCE [LARGE SCALE GENOMIC DNA]</scope>
    <source>
        <strain>BNC1</strain>
    </source>
</reference>
<gene>
    <name evidence="1" type="primary">pdxH</name>
    <name type="ordered locus">Meso_0724</name>
</gene>
<sequence>MSRTMIKNDLKQTDFTEAGEPFRLFAEWLRDAEQSEPNDPNATALATVDPEGMPNVRMVLLKGFDEQGFVFYTNFESAKGQEILSSMKAAMCFHWKSLRRQVRVRGPVEKVTDEEANAYYASRPRGSRIGAWASKQSRPLEGRFALEKAVAEYTAKYAVGEIPRPDYWSGFRIKPVSIEFWHDRPFRLHDRILFERESGGLWTKTRLYP</sequence>
<proteinExistence type="inferred from homology"/>
<keyword id="KW-0285">Flavoprotein</keyword>
<keyword id="KW-0288">FMN</keyword>
<keyword id="KW-0560">Oxidoreductase</keyword>
<keyword id="KW-0664">Pyridoxine biosynthesis</keyword>
<dbReference type="EC" id="1.4.3.5" evidence="1"/>
<dbReference type="EMBL" id="CP000390">
    <property type="protein sequence ID" value="ABG62124.1"/>
    <property type="molecule type" value="Genomic_DNA"/>
</dbReference>
<dbReference type="SMR" id="Q11KF1"/>
<dbReference type="STRING" id="266779.Meso_0724"/>
<dbReference type="KEGG" id="mes:Meso_0724"/>
<dbReference type="eggNOG" id="COG0259">
    <property type="taxonomic scope" value="Bacteria"/>
</dbReference>
<dbReference type="HOGENOM" id="CLU_032263_2_3_5"/>
<dbReference type="UniPathway" id="UPA01068">
    <property type="reaction ID" value="UER00304"/>
</dbReference>
<dbReference type="UniPathway" id="UPA01068">
    <property type="reaction ID" value="UER00305"/>
</dbReference>
<dbReference type="GO" id="GO:0010181">
    <property type="term" value="F:FMN binding"/>
    <property type="evidence" value="ECO:0007669"/>
    <property type="project" value="UniProtKB-UniRule"/>
</dbReference>
<dbReference type="GO" id="GO:0004733">
    <property type="term" value="F:pyridoxamine phosphate oxidase activity"/>
    <property type="evidence" value="ECO:0007669"/>
    <property type="project" value="UniProtKB-UniRule"/>
</dbReference>
<dbReference type="GO" id="GO:0008615">
    <property type="term" value="P:pyridoxine biosynthetic process"/>
    <property type="evidence" value="ECO:0007669"/>
    <property type="project" value="UniProtKB-KW"/>
</dbReference>
<dbReference type="Gene3D" id="2.30.110.10">
    <property type="entry name" value="Electron Transport, Fmn-binding Protein, Chain A"/>
    <property type="match status" value="1"/>
</dbReference>
<dbReference type="HAMAP" id="MF_01629">
    <property type="entry name" value="PdxH"/>
    <property type="match status" value="1"/>
</dbReference>
<dbReference type="InterPro" id="IPR000659">
    <property type="entry name" value="Pyridox_Oxase"/>
</dbReference>
<dbReference type="InterPro" id="IPR019740">
    <property type="entry name" value="Pyridox_Oxase_CS"/>
</dbReference>
<dbReference type="InterPro" id="IPR011576">
    <property type="entry name" value="Pyridox_Oxase_N"/>
</dbReference>
<dbReference type="InterPro" id="IPR019576">
    <property type="entry name" value="Pyridoxamine_oxidase_dimer_C"/>
</dbReference>
<dbReference type="InterPro" id="IPR012349">
    <property type="entry name" value="Split_barrel_FMN-bd"/>
</dbReference>
<dbReference type="NCBIfam" id="TIGR00558">
    <property type="entry name" value="pdxH"/>
    <property type="match status" value="1"/>
</dbReference>
<dbReference type="NCBIfam" id="NF004231">
    <property type="entry name" value="PRK05679.1"/>
    <property type="match status" value="1"/>
</dbReference>
<dbReference type="PANTHER" id="PTHR10851:SF0">
    <property type="entry name" value="PYRIDOXINE-5'-PHOSPHATE OXIDASE"/>
    <property type="match status" value="1"/>
</dbReference>
<dbReference type="PANTHER" id="PTHR10851">
    <property type="entry name" value="PYRIDOXINE-5-PHOSPHATE OXIDASE"/>
    <property type="match status" value="1"/>
</dbReference>
<dbReference type="Pfam" id="PF10590">
    <property type="entry name" value="PNP_phzG_C"/>
    <property type="match status" value="1"/>
</dbReference>
<dbReference type="Pfam" id="PF01243">
    <property type="entry name" value="PNPOx_N"/>
    <property type="match status" value="1"/>
</dbReference>
<dbReference type="PIRSF" id="PIRSF000190">
    <property type="entry name" value="Pyd_amn-ph_oxd"/>
    <property type="match status" value="1"/>
</dbReference>
<dbReference type="SUPFAM" id="SSF50475">
    <property type="entry name" value="FMN-binding split barrel"/>
    <property type="match status" value="1"/>
</dbReference>
<dbReference type="PROSITE" id="PS01064">
    <property type="entry name" value="PYRIDOX_OXIDASE"/>
    <property type="match status" value="1"/>
</dbReference>